<gene>
    <name type="primary">rps15</name>
    <name type="ordered locus">MoinCp078</name>
</gene>
<evidence type="ECO:0000250" key="1"/>
<evidence type="ECO:0000305" key="2"/>
<name>RR15_MORIN</name>
<reference key="1">
    <citation type="submission" date="2005-09" db="EMBL/GenBank/DDBJ databases">
        <title>The chloroplast genome of mulberry: structural features and comparative analysis.</title>
        <authorList>
            <person name="Ravi V."/>
            <person name="Khurana J.P."/>
            <person name="Tyagi A.K."/>
            <person name="Khurana P."/>
        </authorList>
    </citation>
    <scope>NUCLEOTIDE SEQUENCE [LARGE SCALE GENOMIC DNA]</scope>
    <source>
        <strain>cv. K2</strain>
    </source>
</reference>
<feature type="chain" id="PRO_0000276975" description="Small ribosomal subunit protein uS15c">
    <location>
        <begin position="1"/>
        <end position="90"/>
    </location>
</feature>
<geneLocation type="chloroplast"/>
<comment type="subunit">
    <text evidence="1">Part of the 30S ribosomal subunit.</text>
</comment>
<comment type="subcellular location">
    <subcellularLocation>
        <location>Plastid</location>
        <location>Chloroplast</location>
    </subcellularLocation>
</comment>
<comment type="similarity">
    <text evidence="2">Belongs to the universal ribosomal protein uS15 family.</text>
</comment>
<protein>
    <recommendedName>
        <fullName evidence="2">Small ribosomal subunit protein uS15c</fullName>
    </recommendedName>
    <alternativeName>
        <fullName>30S ribosomal protein S15, chloroplastic</fullName>
    </alternativeName>
</protein>
<accession>Q09WW1</accession>
<organism>
    <name type="scientific">Morus indica</name>
    <name type="common">Mulberry</name>
    <dbReference type="NCBI Taxonomy" id="248361"/>
    <lineage>
        <taxon>Eukaryota</taxon>
        <taxon>Viridiplantae</taxon>
        <taxon>Streptophyta</taxon>
        <taxon>Embryophyta</taxon>
        <taxon>Tracheophyta</taxon>
        <taxon>Spermatophyta</taxon>
        <taxon>Magnoliopsida</taxon>
        <taxon>eudicotyledons</taxon>
        <taxon>Gunneridae</taxon>
        <taxon>Pentapetalae</taxon>
        <taxon>rosids</taxon>
        <taxon>fabids</taxon>
        <taxon>Rosales</taxon>
        <taxon>Moraceae</taxon>
        <taxon>Moreae</taxon>
        <taxon>Morus</taxon>
    </lineage>
</organism>
<sequence>MIKKSFISVISHEEKEKNRGSVTFQILSLTNRIRKLSSHLELHRKDYLSQRGLRKILGKRQRMLSYLSKNNRIRYKELINQLDIRESKTR</sequence>
<dbReference type="EMBL" id="DQ226511">
    <property type="protein sequence ID" value="ABB21013.1"/>
    <property type="molecule type" value="Genomic_DNA"/>
</dbReference>
<dbReference type="RefSeq" id="YP_762317.1">
    <property type="nucleotide sequence ID" value="NC_008359.1"/>
</dbReference>
<dbReference type="SMR" id="Q09WW1"/>
<dbReference type="GeneID" id="4290614"/>
<dbReference type="GO" id="GO:0009507">
    <property type="term" value="C:chloroplast"/>
    <property type="evidence" value="ECO:0007669"/>
    <property type="project" value="UniProtKB-SubCell"/>
</dbReference>
<dbReference type="GO" id="GO:1990904">
    <property type="term" value="C:ribonucleoprotein complex"/>
    <property type="evidence" value="ECO:0007669"/>
    <property type="project" value="UniProtKB-KW"/>
</dbReference>
<dbReference type="GO" id="GO:0005840">
    <property type="term" value="C:ribosome"/>
    <property type="evidence" value="ECO:0007669"/>
    <property type="project" value="UniProtKB-KW"/>
</dbReference>
<dbReference type="GO" id="GO:0003735">
    <property type="term" value="F:structural constituent of ribosome"/>
    <property type="evidence" value="ECO:0007669"/>
    <property type="project" value="InterPro"/>
</dbReference>
<dbReference type="GO" id="GO:0006412">
    <property type="term" value="P:translation"/>
    <property type="evidence" value="ECO:0007669"/>
    <property type="project" value="UniProtKB-UniRule"/>
</dbReference>
<dbReference type="CDD" id="cd00353">
    <property type="entry name" value="Ribosomal_S15p_S13e"/>
    <property type="match status" value="1"/>
</dbReference>
<dbReference type="Gene3D" id="1.10.287.10">
    <property type="entry name" value="S15/NS1, RNA-binding"/>
    <property type="match status" value="1"/>
</dbReference>
<dbReference type="HAMAP" id="MF_01343_B">
    <property type="entry name" value="Ribosomal_uS15_B"/>
    <property type="match status" value="1"/>
</dbReference>
<dbReference type="InterPro" id="IPR000589">
    <property type="entry name" value="Ribosomal_uS15"/>
</dbReference>
<dbReference type="InterPro" id="IPR005290">
    <property type="entry name" value="Ribosomal_uS15_bac-type"/>
</dbReference>
<dbReference type="InterPro" id="IPR009068">
    <property type="entry name" value="uS15_NS1_RNA-bd_sf"/>
</dbReference>
<dbReference type="NCBIfam" id="TIGR00952">
    <property type="entry name" value="S15_bact"/>
    <property type="match status" value="1"/>
</dbReference>
<dbReference type="PANTHER" id="PTHR23321">
    <property type="entry name" value="RIBOSOMAL PROTEIN S15, BACTERIAL AND ORGANELLAR"/>
    <property type="match status" value="1"/>
</dbReference>
<dbReference type="PANTHER" id="PTHR23321:SF26">
    <property type="entry name" value="SMALL RIBOSOMAL SUBUNIT PROTEIN US15M"/>
    <property type="match status" value="1"/>
</dbReference>
<dbReference type="Pfam" id="PF00312">
    <property type="entry name" value="Ribosomal_S15"/>
    <property type="match status" value="1"/>
</dbReference>
<dbReference type="SMART" id="SM01387">
    <property type="entry name" value="Ribosomal_S15"/>
    <property type="match status" value="1"/>
</dbReference>
<dbReference type="SUPFAM" id="SSF47060">
    <property type="entry name" value="S15/NS1 RNA-binding domain"/>
    <property type="match status" value="1"/>
</dbReference>
<dbReference type="PROSITE" id="PS00362">
    <property type="entry name" value="RIBOSOMAL_S15"/>
    <property type="match status" value="1"/>
</dbReference>
<keyword id="KW-0150">Chloroplast</keyword>
<keyword id="KW-0934">Plastid</keyword>
<keyword id="KW-0687">Ribonucleoprotein</keyword>
<keyword id="KW-0689">Ribosomal protein</keyword>
<proteinExistence type="inferred from homology"/>